<feature type="chain" id="PRO_0000335163" description="DNA mismatch repair protein MutS">
    <location>
        <begin position="1"/>
        <end position="926"/>
    </location>
</feature>
<feature type="region of interest" description="Disordered" evidence="2">
    <location>
        <begin position="16"/>
        <end position="40"/>
    </location>
</feature>
<feature type="compositionally biased region" description="Low complexity" evidence="2">
    <location>
        <begin position="26"/>
        <end position="40"/>
    </location>
</feature>
<feature type="binding site" evidence="1">
    <location>
        <begin position="658"/>
        <end position="665"/>
    </location>
    <ligand>
        <name>ATP</name>
        <dbReference type="ChEBI" id="CHEBI:30616"/>
    </ligand>
</feature>
<reference key="1">
    <citation type="journal article" date="2007" name="J. Bacteriol.">
        <title>Genome sequence analysis of the emerging human pathogenic acetic acid bacterium Granulibacter bethesdensis.</title>
        <authorList>
            <person name="Greenberg D.E."/>
            <person name="Porcella S.F."/>
            <person name="Zelazny A.M."/>
            <person name="Virtaneva K."/>
            <person name="Sturdevant D.E."/>
            <person name="Kupko J.J. III"/>
            <person name="Barbian K.D."/>
            <person name="Babar A."/>
            <person name="Dorward D.W."/>
            <person name="Holland S.M."/>
        </authorList>
    </citation>
    <scope>NUCLEOTIDE SEQUENCE [LARGE SCALE GENOMIC DNA]</scope>
    <source>
        <strain>ATCC BAA-1260 / CGDNIH1</strain>
    </source>
</reference>
<accession>Q0BV38</accession>
<keyword id="KW-0067">ATP-binding</keyword>
<keyword id="KW-0227">DNA damage</keyword>
<keyword id="KW-0234">DNA repair</keyword>
<keyword id="KW-0238">DNA-binding</keyword>
<keyword id="KW-0547">Nucleotide-binding</keyword>
<keyword id="KW-1185">Reference proteome</keyword>
<name>MUTS_GRABC</name>
<gene>
    <name evidence="1" type="primary">mutS</name>
    <name type="ordered locus">GbCGDNIH1_0416</name>
</gene>
<proteinExistence type="inferred from homology"/>
<evidence type="ECO:0000255" key="1">
    <source>
        <dbReference type="HAMAP-Rule" id="MF_00096"/>
    </source>
</evidence>
<evidence type="ECO:0000256" key="2">
    <source>
        <dbReference type="SAM" id="MobiDB-lite"/>
    </source>
</evidence>
<organism>
    <name type="scientific">Granulibacter bethesdensis (strain ATCC BAA-1260 / CGDNIH1)</name>
    <dbReference type="NCBI Taxonomy" id="391165"/>
    <lineage>
        <taxon>Bacteria</taxon>
        <taxon>Pseudomonadati</taxon>
        <taxon>Pseudomonadota</taxon>
        <taxon>Alphaproteobacteria</taxon>
        <taxon>Acetobacterales</taxon>
        <taxon>Acetobacteraceae</taxon>
        <taxon>Granulibacter</taxon>
    </lineage>
</organism>
<sequence>MLAEKMGAITLHCMPVASTPTRRGRPPGSSAARASNGAGSEAATAIPAGATPAMAQWFVLKNQHPDALLFFRMGDFYELFFQDAENAAATLDIQLTKRGLHEGEPIPMCGVPVHAAEMYLSRLIRRGWRVAIVEQMENPKNRAGKGPIRRDVVRLVTPGTITEETLLDAGRPNLLLAITQSGNRLGAAWLDISTGLFETESLDESGLTALLGRLDPAEILCPSSLHLEMWDARRGPEQPVSDPANARARLAEAYDVSHINVFGSFTDAEAMAAMQALDYVRDAQMGALPRLGHPVPVGEAGRLAMDASTRASLEIDRARDGGTERTLLSAVQRTLTPAGGRMLAAWLGAPLTDRTVITARQDGWGWLLEQPTLSMRLRETLRGCPDMARALGRIALGRGTPRDLAAIRDGAHIAMEAAGLLEGILPSALAELHAALHLPPDLPEMLEAALADPVPARIEDGGVIASGFDGELDAERGLRDDSRKVIAALQTEYAQRYGVASLKIRHHAQLGYMIEVPAVAVETLRTVPELILRQGMANGARFTHPDLSELDRRITEAAERARQREMIVITALRQKVEAHAGSIAACAEALARLDVLQSAARLAESGTWCRPVMTDDQTLTIEAGRHPVVEAALEGGPTPFMPNDTDLSASRRVMLLTGPNMAGKSTYLRQNALIVILAQAGLPVPARAAHIGIVDRLFSRVGASDDLARGQSTFMVEMTETAAILHQAGPRSLVVVDEIGRGTSTLDGLAIAWAVLEALHSRIGARTIFATHFHELARLQGELPMLRPYTMKVQEWRGKVVFLHEVAEGAGGRSWGVHVAKLAGVPAATVRRAGQLLTALEERSVGLTDNATLPLFAASHGNETETEPAEGIHEAKPASLPPELIEALGQMEPDKLTPREALDLMYHFKSMLSSQAHNGDVEAESW</sequence>
<dbReference type="EMBL" id="CP000394">
    <property type="protein sequence ID" value="ABI61314.1"/>
    <property type="molecule type" value="Genomic_DNA"/>
</dbReference>
<dbReference type="RefSeq" id="WP_011631124.1">
    <property type="nucleotide sequence ID" value="NC_008343.2"/>
</dbReference>
<dbReference type="SMR" id="Q0BV38"/>
<dbReference type="STRING" id="391165.GbCGDNIH1_0416"/>
<dbReference type="KEGG" id="gbe:GbCGDNIH1_0416"/>
<dbReference type="eggNOG" id="COG0249">
    <property type="taxonomic scope" value="Bacteria"/>
</dbReference>
<dbReference type="HOGENOM" id="CLU_002472_3_1_5"/>
<dbReference type="Proteomes" id="UP000001963">
    <property type="component" value="Chromosome"/>
</dbReference>
<dbReference type="GO" id="GO:0005829">
    <property type="term" value="C:cytosol"/>
    <property type="evidence" value="ECO:0007669"/>
    <property type="project" value="TreeGrafter"/>
</dbReference>
<dbReference type="GO" id="GO:0005524">
    <property type="term" value="F:ATP binding"/>
    <property type="evidence" value="ECO:0007669"/>
    <property type="project" value="UniProtKB-UniRule"/>
</dbReference>
<dbReference type="GO" id="GO:0140664">
    <property type="term" value="F:ATP-dependent DNA damage sensor activity"/>
    <property type="evidence" value="ECO:0007669"/>
    <property type="project" value="InterPro"/>
</dbReference>
<dbReference type="GO" id="GO:0003684">
    <property type="term" value="F:damaged DNA binding"/>
    <property type="evidence" value="ECO:0007669"/>
    <property type="project" value="UniProtKB-UniRule"/>
</dbReference>
<dbReference type="GO" id="GO:0030983">
    <property type="term" value="F:mismatched DNA binding"/>
    <property type="evidence" value="ECO:0007669"/>
    <property type="project" value="InterPro"/>
</dbReference>
<dbReference type="GO" id="GO:0006298">
    <property type="term" value="P:mismatch repair"/>
    <property type="evidence" value="ECO:0007669"/>
    <property type="project" value="UniProtKB-UniRule"/>
</dbReference>
<dbReference type="CDD" id="cd03284">
    <property type="entry name" value="ABC_MutS1"/>
    <property type="match status" value="1"/>
</dbReference>
<dbReference type="FunFam" id="3.40.1170.10:FF:000001">
    <property type="entry name" value="DNA mismatch repair protein MutS"/>
    <property type="match status" value="1"/>
</dbReference>
<dbReference type="Gene3D" id="1.10.1420.10">
    <property type="match status" value="2"/>
</dbReference>
<dbReference type="Gene3D" id="6.10.140.430">
    <property type="match status" value="1"/>
</dbReference>
<dbReference type="Gene3D" id="3.40.1170.10">
    <property type="entry name" value="DNA repair protein MutS, domain I"/>
    <property type="match status" value="1"/>
</dbReference>
<dbReference type="Gene3D" id="3.30.420.110">
    <property type="entry name" value="MutS, connector domain"/>
    <property type="match status" value="1"/>
</dbReference>
<dbReference type="Gene3D" id="3.40.50.300">
    <property type="entry name" value="P-loop containing nucleotide triphosphate hydrolases"/>
    <property type="match status" value="1"/>
</dbReference>
<dbReference type="HAMAP" id="MF_00096">
    <property type="entry name" value="MutS"/>
    <property type="match status" value="1"/>
</dbReference>
<dbReference type="InterPro" id="IPR005748">
    <property type="entry name" value="DNA_mismatch_repair_MutS"/>
</dbReference>
<dbReference type="InterPro" id="IPR007695">
    <property type="entry name" value="DNA_mismatch_repair_MutS-lik_N"/>
</dbReference>
<dbReference type="InterPro" id="IPR017261">
    <property type="entry name" value="DNA_mismatch_repair_MutS/MSH"/>
</dbReference>
<dbReference type="InterPro" id="IPR000432">
    <property type="entry name" value="DNA_mismatch_repair_MutS_C"/>
</dbReference>
<dbReference type="InterPro" id="IPR007861">
    <property type="entry name" value="DNA_mismatch_repair_MutS_clamp"/>
</dbReference>
<dbReference type="InterPro" id="IPR007696">
    <property type="entry name" value="DNA_mismatch_repair_MutS_core"/>
</dbReference>
<dbReference type="InterPro" id="IPR016151">
    <property type="entry name" value="DNA_mismatch_repair_MutS_N"/>
</dbReference>
<dbReference type="InterPro" id="IPR036187">
    <property type="entry name" value="DNA_mismatch_repair_MutS_sf"/>
</dbReference>
<dbReference type="InterPro" id="IPR007860">
    <property type="entry name" value="DNA_mmatch_repair_MutS_con_dom"/>
</dbReference>
<dbReference type="InterPro" id="IPR045076">
    <property type="entry name" value="MutS"/>
</dbReference>
<dbReference type="InterPro" id="IPR036678">
    <property type="entry name" value="MutS_con_dom_sf"/>
</dbReference>
<dbReference type="InterPro" id="IPR027417">
    <property type="entry name" value="P-loop_NTPase"/>
</dbReference>
<dbReference type="NCBIfam" id="TIGR01070">
    <property type="entry name" value="mutS1"/>
    <property type="match status" value="1"/>
</dbReference>
<dbReference type="NCBIfam" id="NF003810">
    <property type="entry name" value="PRK05399.1"/>
    <property type="match status" value="1"/>
</dbReference>
<dbReference type="PANTHER" id="PTHR11361:SF34">
    <property type="entry name" value="DNA MISMATCH REPAIR PROTEIN MSH1, MITOCHONDRIAL"/>
    <property type="match status" value="1"/>
</dbReference>
<dbReference type="PANTHER" id="PTHR11361">
    <property type="entry name" value="DNA MISMATCH REPAIR PROTEIN MUTS FAMILY MEMBER"/>
    <property type="match status" value="1"/>
</dbReference>
<dbReference type="Pfam" id="PF01624">
    <property type="entry name" value="MutS_I"/>
    <property type="match status" value="1"/>
</dbReference>
<dbReference type="Pfam" id="PF05188">
    <property type="entry name" value="MutS_II"/>
    <property type="match status" value="1"/>
</dbReference>
<dbReference type="Pfam" id="PF05192">
    <property type="entry name" value="MutS_III"/>
    <property type="match status" value="1"/>
</dbReference>
<dbReference type="Pfam" id="PF05190">
    <property type="entry name" value="MutS_IV"/>
    <property type="match status" value="1"/>
</dbReference>
<dbReference type="Pfam" id="PF00488">
    <property type="entry name" value="MutS_V"/>
    <property type="match status" value="1"/>
</dbReference>
<dbReference type="PIRSF" id="PIRSF037677">
    <property type="entry name" value="DNA_mis_repair_Msh6"/>
    <property type="match status" value="1"/>
</dbReference>
<dbReference type="SMART" id="SM00534">
    <property type="entry name" value="MUTSac"/>
    <property type="match status" value="1"/>
</dbReference>
<dbReference type="SMART" id="SM00533">
    <property type="entry name" value="MUTSd"/>
    <property type="match status" value="1"/>
</dbReference>
<dbReference type="SUPFAM" id="SSF55271">
    <property type="entry name" value="DNA repair protein MutS, domain I"/>
    <property type="match status" value="1"/>
</dbReference>
<dbReference type="SUPFAM" id="SSF53150">
    <property type="entry name" value="DNA repair protein MutS, domain II"/>
    <property type="match status" value="1"/>
</dbReference>
<dbReference type="SUPFAM" id="SSF48334">
    <property type="entry name" value="DNA repair protein MutS, domain III"/>
    <property type="match status" value="1"/>
</dbReference>
<dbReference type="SUPFAM" id="SSF52540">
    <property type="entry name" value="P-loop containing nucleoside triphosphate hydrolases"/>
    <property type="match status" value="1"/>
</dbReference>
<dbReference type="PROSITE" id="PS00486">
    <property type="entry name" value="DNA_MISMATCH_REPAIR_2"/>
    <property type="match status" value="1"/>
</dbReference>
<protein>
    <recommendedName>
        <fullName evidence="1">DNA mismatch repair protein MutS</fullName>
    </recommendedName>
</protein>
<comment type="function">
    <text evidence="1">This protein is involved in the repair of mismatches in DNA. It is possible that it carries out the mismatch recognition step. This protein has a weak ATPase activity.</text>
</comment>
<comment type="similarity">
    <text evidence="1">Belongs to the DNA mismatch repair MutS family.</text>
</comment>